<name>TA2R7_RAT</name>
<evidence type="ECO:0000255" key="1"/>
<evidence type="ECO:0000269" key="2">
    <source>
    </source>
</evidence>
<evidence type="ECO:0000305" key="3"/>
<evidence type="ECO:0000312" key="4">
    <source>
        <dbReference type="RGD" id="1597354"/>
    </source>
</evidence>
<sequence length="312" mass="35844">MTYETDTTLMFVAVCEALVGILGNAFIALVNFMGWMKNRKITAIDLILSSLAMSRICLQCIILLDCIILVQYPDTYNRGKEMRIIDFFWTLTNHLSVWFATCLSIFYFFKIANFFHPLFLWIKWRIDKLILRTLLACLILSLCFSLPVTENLTDDFRRCVKTKERINSTLRCKLNKAGYASVKVNLNLVMLFPFSVSLVSFLLLILSLWRHTRQMQLNVTGYNDPSTTAHVKATKAVISFLVLFIVYCLAFLIATSSYFMPESELAVIWGELIALIYPSSHSFILILGNSKLKQASVRVLCRVKTMLKGRKY</sequence>
<accession>Q9JKE9</accession>
<accession>Q67ET9</accession>
<reference key="1">
    <citation type="submission" date="2003-08" db="EMBL/GenBank/DDBJ databases">
        <title>Identification of new putative rat taste receptors belonging to the T2R family.</title>
        <authorList>
            <person name="Conte C."/>
            <person name="Ebeling M."/>
            <person name="Marcuz A."/>
            <person name="Andres-Barquin P.J."/>
        </authorList>
    </citation>
    <scope>NUCLEOTIDE SEQUENCE [GENOMIC DNA]</scope>
    <source>
        <strain>Sprague-Dawley</strain>
    </source>
</reference>
<reference key="2">
    <citation type="journal article" date="2000" name="Cell">
        <title>A novel family of mammalian taste receptors.</title>
        <authorList>
            <person name="Adler E."/>
            <person name="Hoon M.A."/>
            <person name="Mueller K.L."/>
            <person name="Chandrashekar J."/>
            <person name="Ryba N.J.P."/>
            <person name="Zuker C.S."/>
        </authorList>
    </citation>
    <scope>NUCLEOTIDE SEQUENCE [MRNA] OF 16-297</scope>
    <scope>TOPOLOGY</scope>
</reference>
<reference key="3">
    <citation type="journal article" date="2000" name="Cell">
        <title>T2Rs function as bitter taste receptors.</title>
        <authorList>
            <person name="Chandrashekar J."/>
            <person name="Mueller K.L."/>
            <person name="Hoon M.A."/>
            <person name="Adler E."/>
            <person name="Feng L."/>
            <person name="Guo W."/>
            <person name="Zuker C.S."/>
            <person name="Ryba N.J.P."/>
        </authorList>
    </citation>
    <scope>CHARACTERIZATION</scope>
</reference>
<reference key="4">
    <citation type="journal article" date="2002" name="Proc. Natl. Acad. Sci. U.S.A.">
        <title>Expression of bitter taste receptors of the T2R family in the gastrointestinal tract and enteroendocrine STC-1 cells.</title>
        <authorList>
            <person name="Wu S.V."/>
            <person name="Rozengurt N."/>
            <person name="Yang M."/>
            <person name="Young S.H."/>
            <person name="Sinnett-Smith J."/>
            <person name="Rozengurt E."/>
        </authorList>
    </citation>
    <scope>TISSUE SPECIFICITY</scope>
</reference>
<reference key="5">
    <citation type="journal article" date="2002" name="Curr. Opin. Neurobiol.">
        <title>Receptors for bitter and sweet taste.</title>
        <authorList>
            <person name="Montmayeur J.-P."/>
            <person name="Matsunami H."/>
        </authorList>
    </citation>
    <scope>REVIEW</scope>
</reference>
<reference key="6">
    <citation type="journal article" date="2002" name="J. Biol. Chem.">
        <title>Molecular mechanisms of bitter and sweet taste transduction.</title>
        <authorList>
            <person name="Margolskee R.F."/>
        </authorList>
    </citation>
    <scope>REVIEW</scope>
</reference>
<reference key="7">
    <citation type="journal article" date="2003" name="Cell">
        <title>Coding of sweet, bitter, and umami tastes: different receptor cells sharing similar signaling pathways.</title>
        <authorList>
            <person name="Zhang Y."/>
            <person name="Hoon M.A."/>
            <person name="Chandrashekar J."/>
            <person name="Mueller K.L."/>
            <person name="Cook B."/>
            <person name="Wu D."/>
            <person name="Zuker C.S."/>
            <person name="Ryba N.J."/>
        </authorList>
    </citation>
    <scope>REVIEW</scope>
</reference>
<organism>
    <name type="scientific">Rattus norvegicus</name>
    <name type="common">Rat</name>
    <dbReference type="NCBI Taxonomy" id="10116"/>
    <lineage>
        <taxon>Eukaryota</taxon>
        <taxon>Metazoa</taxon>
        <taxon>Chordata</taxon>
        <taxon>Craniata</taxon>
        <taxon>Vertebrata</taxon>
        <taxon>Euteleostomi</taxon>
        <taxon>Mammalia</taxon>
        <taxon>Eutheria</taxon>
        <taxon>Euarchontoglires</taxon>
        <taxon>Glires</taxon>
        <taxon>Rodentia</taxon>
        <taxon>Myomorpha</taxon>
        <taxon>Muroidea</taxon>
        <taxon>Muridae</taxon>
        <taxon>Murinae</taxon>
        <taxon>Rattus</taxon>
    </lineage>
</organism>
<feature type="chain" id="PRO_0000082218" description="Taste receptor type 2 member 7">
    <location>
        <begin position="1"/>
        <end position="312"/>
    </location>
</feature>
<feature type="topological domain" description="Extracellular" evidence="1">
    <location>
        <begin position="1"/>
        <end position="9"/>
    </location>
</feature>
<feature type="transmembrane region" description="Helical; Name=1" evidence="1">
    <location>
        <begin position="10"/>
        <end position="30"/>
    </location>
</feature>
<feature type="topological domain" description="Cytoplasmic" evidence="1">
    <location>
        <begin position="31"/>
        <end position="49"/>
    </location>
</feature>
<feature type="transmembrane region" description="Helical; Name=2" evidence="1">
    <location>
        <begin position="50"/>
        <end position="70"/>
    </location>
</feature>
<feature type="topological domain" description="Extracellular" evidence="1">
    <location>
        <begin position="71"/>
        <end position="101"/>
    </location>
</feature>
<feature type="transmembrane region" description="Helical; Name=3" evidence="1">
    <location>
        <begin position="102"/>
        <end position="122"/>
    </location>
</feature>
<feature type="topological domain" description="Cytoplasmic" evidence="1">
    <location>
        <begin position="123"/>
        <end position="128"/>
    </location>
</feature>
<feature type="transmembrane region" description="Helical; Name=4" evidence="1">
    <location>
        <begin position="129"/>
        <end position="149"/>
    </location>
</feature>
<feature type="topological domain" description="Extracellular" evidence="1">
    <location>
        <begin position="150"/>
        <end position="187"/>
    </location>
</feature>
<feature type="transmembrane region" description="Helical; Name=5" evidence="1">
    <location>
        <begin position="188"/>
        <end position="208"/>
    </location>
</feature>
<feature type="topological domain" description="Cytoplasmic" evidence="1">
    <location>
        <begin position="209"/>
        <end position="235"/>
    </location>
</feature>
<feature type="transmembrane region" description="Helical; Name=6" evidence="1">
    <location>
        <begin position="236"/>
        <end position="256"/>
    </location>
</feature>
<feature type="topological domain" description="Extracellular" evidence="1">
    <location>
        <begin position="257"/>
        <end position="266"/>
    </location>
</feature>
<feature type="transmembrane region" description="Helical; Name=7" evidence="1">
    <location>
        <begin position="267"/>
        <end position="287"/>
    </location>
</feature>
<feature type="topological domain" description="Cytoplasmic" evidence="1">
    <location>
        <begin position="288"/>
        <end position="312"/>
    </location>
</feature>
<feature type="glycosylation site" description="N-linked (GlcNAc...) asparagine" evidence="1">
    <location>
        <position position="151"/>
    </location>
</feature>
<feature type="glycosylation site" description="N-linked (GlcNAc...) asparagine" evidence="1">
    <location>
        <position position="167"/>
    </location>
</feature>
<proteinExistence type="evidence at protein level"/>
<comment type="function">
    <text>Gustducin-coupled receptor implicated in the perception of bitter compounds in the oral cavity and the gastrointestinal tract. Signals through PLCB2 and the calcium-regulated cation channel TRPM5.</text>
</comment>
<comment type="subcellular location">
    <subcellularLocation>
        <location>Membrane</location>
        <topology>Multi-pass membrane protein</topology>
    </subcellularLocation>
</comment>
<comment type="tissue specificity">
    <text evidence="2">Expressed in subsets of taste receptor cells of the tongue and palate epithelium and exclusively in gustducin-positive cells. Expressed in 15% taste bud cells in circumvallate and foliate papillae but only in 2% in fungiform papillae. Expressed in the duodenum, antrum and fundus (part of the stomach) and in gastric endocrine cells.</text>
</comment>
<comment type="miscellaneous">
    <text>Several bitter taste receptors are expressed in a single taste receptor cell.</text>
</comment>
<comment type="similarity">
    <text evidence="3">Belongs to the G-protein coupled receptor T2R family.</text>
</comment>
<keyword id="KW-0297">G-protein coupled receptor</keyword>
<keyword id="KW-0325">Glycoprotein</keyword>
<keyword id="KW-0472">Membrane</keyword>
<keyword id="KW-0675">Receptor</keyword>
<keyword id="KW-1185">Reference proteome</keyword>
<keyword id="KW-0716">Sensory transduction</keyword>
<keyword id="KW-0919">Taste</keyword>
<keyword id="KW-0807">Transducer</keyword>
<keyword id="KW-0812">Transmembrane</keyword>
<keyword id="KW-1133">Transmembrane helix</keyword>
<protein>
    <recommendedName>
        <fullName>Taste receptor type 2 member 7</fullName>
        <shortName>T2R7</shortName>
    </recommendedName>
    <alternativeName>
        <fullName evidence="4">Taste receptor type 2 member 130</fullName>
    </alternativeName>
    <alternativeName>
        <fullName>Taste receptor type 2 member 6</fullName>
        <shortName>T2R6</shortName>
    </alternativeName>
</protein>
<gene>
    <name type="primary">Tas2r7</name>
    <name evidence="4" type="synonym">Tas2r130</name>
    <name type="synonym">Tas2r6</name>
</gene>
<dbReference type="EMBL" id="AY362731">
    <property type="protein sequence ID" value="AAR13340.1"/>
    <property type="molecule type" value="Genomic_DNA"/>
</dbReference>
<dbReference type="EMBL" id="AF240766">
    <property type="protein sequence ID" value="AAF45304.1"/>
    <property type="molecule type" value="mRNA"/>
</dbReference>
<dbReference type="RefSeq" id="XP_001074122.1">
    <property type="nucleotide sequence ID" value="XM_001074122.3"/>
</dbReference>
<dbReference type="RefSeq" id="XP_002726514.1">
    <property type="nucleotide sequence ID" value="XM_002726468.3"/>
</dbReference>
<dbReference type="SMR" id="Q9JKE9"/>
<dbReference type="FunCoup" id="Q9JKE9">
    <property type="interactions" value="82"/>
</dbReference>
<dbReference type="STRING" id="10116.ENSRNOP00000007435"/>
<dbReference type="GlyCosmos" id="Q9JKE9">
    <property type="glycosylation" value="2 sites, No reported glycans"/>
</dbReference>
<dbReference type="GlyGen" id="Q9JKE9">
    <property type="glycosylation" value="2 sites"/>
</dbReference>
<dbReference type="PhosphoSitePlus" id="Q9JKE9"/>
<dbReference type="PaxDb" id="10116-ENSRNOP00000007435"/>
<dbReference type="Ensembl" id="ENSRNOT00000007435.5">
    <property type="protein sequence ID" value="ENSRNOP00000007435.4"/>
    <property type="gene ID" value="ENSRNOG00000005645.5"/>
</dbReference>
<dbReference type="UCSC" id="RGD:1597354">
    <property type="organism name" value="rat"/>
</dbReference>
<dbReference type="AGR" id="RGD:1597354"/>
<dbReference type="RGD" id="1597354">
    <property type="gene designation" value="Tas2r130"/>
</dbReference>
<dbReference type="eggNOG" id="ENOG502SKRK">
    <property type="taxonomic scope" value="Eukaryota"/>
</dbReference>
<dbReference type="GeneTree" id="ENSGT01100000263477"/>
<dbReference type="HOGENOM" id="CLU_072337_3_0_1"/>
<dbReference type="InParanoid" id="Q9JKE9"/>
<dbReference type="OMA" id="WRIDRVI"/>
<dbReference type="OrthoDB" id="8876749at2759"/>
<dbReference type="PhylomeDB" id="Q9JKE9"/>
<dbReference type="TreeFam" id="TF335891"/>
<dbReference type="Reactome" id="R-RNO-418594">
    <property type="pathway name" value="G alpha (i) signalling events"/>
</dbReference>
<dbReference type="Reactome" id="R-RNO-420499">
    <property type="pathway name" value="Class C/3 (Metabotropic glutamate/pheromone receptors)"/>
</dbReference>
<dbReference type="Reactome" id="R-RNO-9717207">
    <property type="pathway name" value="Sensory perception of sweet, bitter, and umami (glutamate) taste"/>
</dbReference>
<dbReference type="PRO" id="PR:Q9JKE9"/>
<dbReference type="Proteomes" id="UP000002494">
    <property type="component" value="Chromosome 4"/>
</dbReference>
<dbReference type="GO" id="GO:0016020">
    <property type="term" value="C:membrane"/>
    <property type="evidence" value="ECO:0000318"/>
    <property type="project" value="GO_Central"/>
</dbReference>
<dbReference type="GO" id="GO:0033038">
    <property type="term" value="F:bitter taste receptor activity"/>
    <property type="evidence" value="ECO:0000266"/>
    <property type="project" value="RGD"/>
</dbReference>
<dbReference type="GO" id="GO:0004930">
    <property type="term" value="F:G protein-coupled receptor activity"/>
    <property type="evidence" value="ECO:0007669"/>
    <property type="project" value="UniProtKB-KW"/>
</dbReference>
<dbReference type="GO" id="GO:0008527">
    <property type="term" value="F:taste receptor activity"/>
    <property type="evidence" value="ECO:0000304"/>
    <property type="project" value="UniProtKB"/>
</dbReference>
<dbReference type="GO" id="GO:0001580">
    <property type="term" value="P:detection of chemical stimulus involved in sensory perception of bitter taste"/>
    <property type="evidence" value="ECO:0000266"/>
    <property type="project" value="RGD"/>
</dbReference>
<dbReference type="CDD" id="cd15023">
    <property type="entry name" value="7tm_TAS2R7-like"/>
    <property type="match status" value="1"/>
</dbReference>
<dbReference type="FunFam" id="1.20.1070.10:FF:000042">
    <property type="entry name" value="Taste receptor type 2 member 7"/>
    <property type="match status" value="1"/>
</dbReference>
<dbReference type="Gene3D" id="1.20.1070.10">
    <property type="entry name" value="Rhodopsin 7-helix transmembrane proteins"/>
    <property type="match status" value="1"/>
</dbReference>
<dbReference type="InterPro" id="IPR017452">
    <property type="entry name" value="GPCR_Rhodpsn_7TM"/>
</dbReference>
<dbReference type="InterPro" id="IPR007960">
    <property type="entry name" value="TAS2R"/>
</dbReference>
<dbReference type="PANTHER" id="PTHR11394">
    <property type="entry name" value="TASTE RECEPTOR TYPE 2"/>
    <property type="match status" value="1"/>
</dbReference>
<dbReference type="PANTHER" id="PTHR11394:SF58">
    <property type="entry name" value="TASTE RECEPTOR TYPE 2 MEMBER 7"/>
    <property type="match status" value="1"/>
</dbReference>
<dbReference type="Pfam" id="PF05296">
    <property type="entry name" value="TAS2R"/>
    <property type="match status" value="1"/>
</dbReference>
<dbReference type="SUPFAM" id="SSF81321">
    <property type="entry name" value="Family A G protein-coupled receptor-like"/>
    <property type="match status" value="1"/>
</dbReference>
<dbReference type="PROSITE" id="PS50262">
    <property type="entry name" value="G_PROTEIN_RECEP_F1_2"/>
    <property type="match status" value="1"/>
</dbReference>